<dbReference type="EMBL" id="AP009152">
    <property type="protein sequence ID" value="BAG28932.1"/>
    <property type="molecule type" value="Genomic_DNA"/>
</dbReference>
<dbReference type="RefSeq" id="WP_012397658.1">
    <property type="nucleotide sequence ID" value="NZ_VECX01000001.1"/>
</dbReference>
<dbReference type="SMR" id="B2GII3"/>
<dbReference type="STRING" id="378753.KRH_05850"/>
<dbReference type="KEGG" id="krh:KRH_05850"/>
<dbReference type="eggNOG" id="COG0080">
    <property type="taxonomic scope" value="Bacteria"/>
</dbReference>
<dbReference type="HOGENOM" id="CLU_074237_2_1_11"/>
<dbReference type="OrthoDB" id="9802408at2"/>
<dbReference type="Proteomes" id="UP000008838">
    <property type="component" value="Chromosome"/>
</dbReference>
<dbReference type="GO" id="GO:0022625">
    <property type="term" value="C:cytosolic large ribosomal subunit"/>
    <property type="evidence" value="ECO:0007669"/>
    <property type="project" value="TreeGrafter"/>
</dbReference>
<dbReference type="GO" id="GO:0070180">
    <property type="term" value="F:large ribosomal subunit rRNA binding"/>
    <property type="evidence" value="ECO:0007669"/>
    <property type="project" value="UniProtKB-UniRule"/>
</dbReference>
<dbReference type="GO" id="GO:0003735">
    <property type="term" value="F:structural constituent of ribosome"/>
    <property type="evidence" value="ECO:0007669"/>
    <property type="project" value="InterPro"/>
</dbReference>
<dbReference type="GO" id="GO:0006412">
    <property type="term" value="P:translation"/>
    <property type="evidence" value="ECO:0007669"/>
    <property type="project" value="UniProtKB-UniRule"/>
</dbReference>
<dbReference type="CDD" id="cd00349">
    <property type="entry name" value="Ribosomal_L11"/>
    <property type="match status" value="1"/>
</dbReference>
<dbReference type="FunFam" id="1.10.10.250:FF:000001">
    <property type="entry name" value="50S ribosomal protein L11"/>
    <property type="match status" value="1"/>
</dbReference>
<dbReference type="FunFam" id="3.30.1550.10:FF:000001">
    <property type="entry name" value="50S ribosomal protein L11"/>
    <property type="match status" value="1"/>
</dbReference>
<dbReference type="Gene3D" id="1.10.10.250">
    <property type="entry name" value="Ribosomal protein L11, C-terminal domain"/>
    <property type="match status" value="1"/>
</dbReference>
<dbReference type="Gene3D" id="3.30.1550.10">
    <property type="entry name" value="Ribosomal protein L11/L12, N-terminal domain"/>
    <property type="match status" value="1"/>
</dbReference>
<dbReference type="HAMAP" id="MF_00736">
    <property type="entry name" value="Ribosomal_uL11"/>
    <property type="match status" value="1"/>
</dbReference>
<dbReference type="InterPro" id="IPR000911">
    <property type="entry name" value="Ribosomal_uL11"/>
</dbReference>
<dbReference type="InterPro" id="IPR006519">
    <property type="entry name" value="Ribosomal_uL11_bac-typ"/>
</dbReference>
<dbReference type="InterPro" id="IPR020783">
    <property type="entry name" value="Ribosomal_uL11_C"/>
</dbReference>
<dbReference type="InterPro" id="IPR036769">
    <property type="entry name" value="Ribosomal_uL11_C_sf"/>
</dbReference>
<dbReference type="InterPro" id="IPR020785">
    <property type="entry name" value="Ribosomal_uL11_CS"/>
</dbReference>
<dbReference type="InterPro" id="IPR020784">
    <property type="entry name" value="Ribosomal_uL11_N"/>
</dbReference>
<dbReference type="InterPro" id="IPR036796">
    <property type="entry name" value="Ribosomal_uL11_N_sf"/>
</dbReference>
<dbReference type="NCBIfam" id="TIGR01632">
    <property type="entry name" value="L11_bact"/>
    <property type="match status" value="1"/>
</dbReference>
<dbReference type="PANTHER" id="PTHR11661">
    <property type="entry name" value="60S RIBOSOMAL PROTEIN L12"/>
    <property type="match status" value="1"/>
</dbReference>
<dbReference type="PANTHER" id="PTHR11661:SF1">
    <property type="entry name" value="LARGE RIBOSOMAL SUBUNIT PROTEIN UL11M"/>
    <property type="match status" value="1"/>
</dbReference>
<dbReference type="Pfam" id="PF00298">
    <property type="entry name" value="Ribosomal_L11"/>
    <property type="match status" value="1"/>
</dbReference>
<dbReference type="Pfam" id="PF03946">
    <property type="entry name" value="Ribosomal_L11_N"/>
    <property type="match status" value="1"/>
</dbReference>
<dbReference type="SMART" id="SM00649">
    <property type="entry name" value="RL11"/>
    <property type="match status" value="1"/>
</dbReference>
<dbReference type="SUPFAM" id="SSF54747">
    <property type="entry name" value="Ribosomal L11/L12e N-terminal domain"/>
    <property type="match status" value="1"/>
</dbReference>
<dbReference type="SUPFAM" id="SSF46906">
    <property type="entry name" value="Ribosomal protein L11, C-terminal domain"/>
    <property type="match status" value="1"/>
</dbReference>
<dbReference type="PROSITE" id="PS00359">
    <property type="entry name" value="RIBOSOMAL_L11"/>
    <property type="match status" value="1"/>
</dbReference>
<comment type="function">
    <text evidence="1">Forms part of the ribosomal stalk which helps the ribosome interact with GTP-bound translation factors.</text>
</comment>
<comment type="subunit">
    <text evidence="1">Part of the ribosomal stalk of the 50S ribosomal subunit. Interacts with L10 and the large rRNA to form the base of the stalk. L10 forms an elongated spine to which L12 dimers bind in a sequential fashion forming a multimeric L10(L12)X complex.</text>
</comment>
<comment type="PTM">
    <text evidence="1">One or more lysine residues are methylated.</text>
</comment>
<comment type="similarity">
    <text evidence="1">Belongs to the universal ribosomal protein uL11 family.</text>
</comment>
<protein>
    <recommendedName>
        <fullName evidence="1">Large ribosomal subunit protein uL11</fullName>
    </recommendedName>
    <alternativeName>
        <fullName evidence="2">50S ribosomal protein L11</fullName>
    </alternativeName>
</protein>
<keyword id="KW-0488">Methylation</keyword>
<keyword id="KW-1185">Reference proteome</keyword>
<keyword id="KW-0687">Ribonucleoprotein</keyword>
<keyword id="KW-0689">Ribosomal protein</keyword>
<keyword id="KW-0694">RNA-binding</keyword>
<keyword id="KW-0699">rRNA-binding</keyword>
<reference key="1">
    <citation type="journal article" date="2008" name="J. Bacteriol.">
        <title>Complete genome sequence of the soil actinomycete Kocuria rhizophila.</title>
        <authorList>
            <person name="Takarada H."/>
            <person name="Sekine M."/>
            <person name="Kosugi H."/>
            <person name="Matsuo Y."/>
            <person name="Fujisawa T."/>
            <person name="Omata S."/>
            <person name="Kishi E."/>
            <person name="Shimizu A."/>
            <person name="Tsukatani N."/>
            <person name="Tanikawa S."/>
            <person name="Fujita N."/>
            <person name="Harayama S."/>
        </authorList>
    </citation>
    <scope>NUCLEOTIDE SEQUENCE [LARGE SCALE GENOMIC DNA]</scope>
    <source>
        <strain>ATCC 9341 / DSM 348 / NBRC 103217 / DC2201</strain>
    </source>
</reference>
<accession>B2GII3</accession>
<name>RL11_KOCRD</name>
<proteinExistence type="inferred from homology"/>
<feature type="chain" id="PRO_1000195655" description="Large ribosomal subunit protein uL11">
    <location>
        <begin position="1"/>
        <end position="143"/>
    </location>
</feature>
<organism>
    <name type="scientific">Kocuria rhizophila (strain ATCC 9341 / DSM 348 / NBRC 103217 / DC2201)</name>
    <dbReference type="NCBI Taxonomy" id="378753"/>
    <lineage>
        <taxon>Bacteria</taxon>
        <taxon>Bacillati</taxon>
        <taxon>Actinomycetota</taxon>
        <taxon>Actinomycetes</taxon>
        <taxon>Micrococcales</taxon>
        <taxon>Micrococcaceae</taxon>
        <taxon>Kocuria</taxon>
    </lineage>
</organism>
<evidence type="ECO:0000255" key="1">
    <source>
        <dbReference type="HAMAP-Rule" id="MF_00736"/>
    </source>
</evidence>
<evidence type="ECO:0000305" key="2"/>
<sequence length="143" mass="15006">MAPKKKKVAGLIKLQIQAGAANPAPPVGPALGQHGVNIMEFCKAYNAATESQRGNIVPVEITVYEDRSFSFITKTPPAAQLIKKAAGVAKGSGVPHTTKVGKITMDQVREIAETKKEDLNANDIDAAAKIIAGTARSMGIEVN</sequence>
<gene>
    <name evidence="1" type="primary">rplK</name>
    <name type="ordered locus">KRH_05850</name>
</gene>